<keyword id="KW-0732">Signal</keyword>
<keyword id="KW-0946">Virion</keyword>
<sequence length="151" mass="17584">MYYSIIIACLVLLLCLVIYVGHRADHALKYLEGMWHGDPVFLKQSGLQSFYLYIQPGHTCFFSIVNKNGEKLMETKIPCTITNKIYMFFKPIFEFHVVMAHTYSYFPKQFNFLLDSTEGKLILENNHVIYAVLYKDNFATALGKTVKKYIT</sequence>
<dbReference type="EMBL" id="AY261361">
    <property type="status" value="NOT_ANNOTATED_CDS"/>
    <property type="molecule type" value="Genomic_DNA"/>
</dbReference>
<dbReference type="Proteomes" id="UP000000860">
    <property type="component" value="Segment"/>
</dbReference>
<dbReference type="GO" id="GO:0044423">
    <property type="term" value="C:virion component"/>
    <property type="evidence" value="ECO:0007669"/>
    <property type="project" value="UniProtKB-KW"/>
</dbReference>
<accession>P0CA60</accession>
<reference key="1">
    <citation type="submission" date="2003-03" db="EMBL/GenBank/DDBJ databases">
        <title>African swine fever virus genomes.</title>
        <authorList>
            <person name="Kutish G.F."/>
            <person name="Rock D.L."/>
        </authorList>
    </citation>
    <scope>NUCLEOTIDE SEQUENCE [LARGE SCALE GENOMIC DNA]</scope>
</reference>
<feature type="signal peptide" evidence="2">
    <location>
        <begin position="1"/>
        <end position="24"/>
    </location>
</feature>
<feature type="chain" id="PRO_0000373536" description="Uncharacterized protein EP152R">
    <location>
        <begin position="25"/>
        <end position="151"/>
    </location>
</feature>
<organismHost>
    <name type="scientific">Ornithodoros</name>
    <name type="common">relapsing fever ticks</name>
    <dbReference type="NCBI Taxonomy" id="6937"/>
</organismHost>
<organismHost>
    <name type="scientific">Phacochoerus aethiopicus</name>
    <name type="common">Warthog</name>
    <dbReference type="NCBI Taxonomy" id="85517"/>
</organismHost>
<organismHost>
    <name type="scientific">Phacochoerus africanus</name>
    <name type="common">Warthog</name>
    <dbReference type="NCBI Taxonomy" id="41426"/>
</organismHost>
<organismHost>
    <name type="scientific">Potamochoerus larvatus</name>
    <name type="common">Bushpig</name>
    <dbReference type="NCBI Taxonomy" id="273792"/>
</organismHost>
<organismHost>
    <name type="scientific">Sus scrofa</name>
    <name type="common">Pig</name>
    <dbReference type="NCBI Taxonomy" id="9823"/>
</organismHost>
<protein>
    <recommendedName>
        <fullName>Uncharacterized protein EP152R</fullName>
        <shortName>pEP152R</shortName>
    </recommendedName>
</protein>
<evidence type="ECO:0000250" key="1">
    <source>
        <dbReference type="UniProtKB" id="Q65149"/>
    </source>
</evidence>
<evidence type="ECO:0000255" key="2"/>
<evidence type="ECO:0000305" key="3"/>
<name>VF152_ASFM2</name>
<comment type="subcellular location">
    <subcellularLocation>
        <location evidence="1">Virion</location>
    </subcellularLocation>
</comment>
<comment type="similarity">
    <text evidence="3">Belongs to the asfivirus EP152R family.</text>
</comment>
<organism>
    <name type="scientific">African swine fever virus (isolate Tick/Malawi/Lil 20-1/1983)</name>
    <name type="common">ASFV</name>
    <dbReference type="NCBI Taxonomy" id="10500"/>
    <lineage>
        <taxon>Viruses</taxon>
        <taxon>Varidnaviria</taxon>
        <taxon>Bamfordvirae</taxon>
        <taxon>Nucleocytoviricota</taxon>
        <taxon>Pokkesviricetes</taxon>
        <taxon>Asfuvirales</taxon>
        <taxon>Asfarviridae</taxon>
        <taxon>Asfivirus</taxon>
        <taxon>African swine fever virus</taxon>
    </lineage>
</organism>
<proteinExistence type="inferred from homology"/>
<gene>
    <name type="ordered locus">Mal-064</name>
</gene>